<feature type="initiator methionine" description="Removed" evidence="1">
    <location>
        <position position="1"/>
    </location>
</feature>
<feature type="chain" id="PRO_0000209522" description="Probable tautomerase YrdN">
    <location>
        <begin position="2"/>
        <end position="129"/>
    </location>
</feature>
<feature type="active site" description="Proton acceptor; via imino nitrogen" evidence="1">
    <location>
        <position position="2"/>
    </location>
</feature>
<keyword id="KW-0413">Isomerase</keyword>
<keyword id="KW-1185">Reference proteome</keyword>
<accession>P94502</accession>
<accession>O08187</accession>
<reference key="1">
    <citation type="journal article" date="1997" name="J. Bacteriol.">
        <title>Altered transcription activation specificity of a mutant form of Bacillus subtilis GltR, a LysR family member.</title>
        <authorList>
            <person name="Belitsky B.R."/>
            <person name="Sonenshein A.L."/>
        </authorList>
    </citation>
    <scope>NUCLEOTIDE SEQUENCE [GENOMIC DNA]</scope>
    <source>
        <strain>168 / SMY</strain>
    </source>
</reference>
<reference key="2">
    <citation type="journal article" date="1997" name="Microbiology">
        <title>Sequence of the Bacillus subtilis genome region in the vicinity of the lev operon reveals two new extracytoplasmic function RNA polymerase sigma factors SigV and SigZ.</title>
        <authorList>
            <person name="Sorokin A."/>
            <person name="Bolotin A."/>
            <person name="Purnelle B."/>
            <person name="Hilbert H."/>
            <person name="Lauber J."/>
            <person name="Duesterhoeft A."/>
            <person name="Ehrlich S.D."/>
        </authorList>
    </citation>
    <scope>NUCLEOTIDE SEQUENCE [GENOMIC DNA]</scope>
    <source>
        <strain>168</strain>
    </source>
</reference>
<reference key="3">
    <citation type="journal article" date="1997" name="Nature">
        <title>The complete genome sequence of the Gram-positive bacterium Bacillus subtilis.</title>
        <authorList>
            <person name="Kunst F."/>
            <person name="Ogasawara N."/>
            <person name="Moszer I."/>
            <person name="Albertini A.M."/>
            <person name="Alloni G."/>
            <person name="Azevedo V."/>
            <person name="Bertero M.G."/>
            <person name="Bessieres P."/>
            <person name="Bolotin A."/>
            <person name="Borchert S."/>
            <person name="Borriss R."/>
            <person name="Boursier L."/>
            <person name="Brans A."/>
            <person name="Braun M."/>
            <person name="Brignell S.C."/>
            <person name="Bron S."/>
            <person name="Brouillet S."/>
            <person name="Bruschi C.V."/>
            <person name="Caldwell B."/>
            <person name="Capuano V."/>
            <person name="Carter N.M."/>
            <person name="Choi S.-K."/>
            <person name="Codani J.-J."/>
            <person name="Connerton I.F."/>
            <person name="Cummings N.J."/>
            <person name="Daniel R.A."/>
            <person name="Denizot F."/>
            <person name="Devine K.M."/>
            <person name="Duesterhoeft A."/>
            <person name="Ehrlich S.D."/>
            <person name="Emmerson P.T."/>
            <person name="Entian K.-D."/>
            <person name="Errington J."/>
            <person name="Fabret C."/>
            <person name="Ferrari E."/>
            <person name="Foulger D."/>
            <person name="Fritz C."/>
            <person name="Fujita M."/>
            <person name="Fujita Y."/>
            <person name="Fuma S."/>
            <person name="Galizzi A."/>
            <person name="Galleron N."/>
            <person name="Ghim S.-Y."/>
            <person name="Glaser P."/>
            <person name="Goffeau A."/>
            <person name="Golightly E.J."/>
            <person name="Grandi G."/>
            <person name="Guiseppi G."/>
            <person name="Guy B.J."/>
            <person name="Haga K."/>
            <person name="Haiech J."/>
            <person name="Harwood C.R."/>
            <person name="Henaut A."/>
            <person name="Hilbert H."/>
            <person name="Holsappel S."/>
            <person name="Hosono S."/>
            <person name="Hullo M.-F."/>
            <person name="Itaya M."/>
            <person name="Jones L.-M."/>
            <person name="Joris B."/>
            <person name="Karamata D."/>
            <person name="Kasahara Y."/>
            <person name="Klaerr-Blanchard M."/>
            <person name="Klein C."/>
            <person name="Kobayashi Y."/>
            <person name="Koetter P."/>
            <person name="Koningstein G."/>
            <person name="Krogh S."/>
            <person name="Kumano M."/>
            <person name="Kurita K."/>
            <person name="Lapidus A."/>
            <person name="Lardinois S."/>
            <person name="Lauber J."/>
            <person name="Lazarevic V."/>
            <person name="Lee S.-M."/>
            <person name="Levine A."/>
            <person name="Liu H."/>
            <person name="Masuda S."/>
            <person name="Mauel C."/>
            <person name="Medigue C."/>
            <person name="Medina N."/>
            <person name="Mellado R.P."/>
            <person name="Mizuno M."/>
            <person name="Moestl D."/>
            <person name="Nakai S."/>
            <person name="Noback M."/>
            <person name="Noone D."/>
            <person name="O'Reilly M."/>
            <person name="Ogawa K."/>
            <person name="Ogiwara A."/>
            <person name="Oudega B."/>
            <person name="Park S.-H."/>
            <person name="Parro V."/>
            <person name="Pohl T.M."/>
            <person name="Portetelle D."/>
            <person name="Porwollik S."/>
            <person name="Prescott A.M."/>
            <person name="Presecan E."/>
            <person name="Pujic P."/>
            <person name="Purnelle B."/>
            <person name="Rapoport G."/>
            <person name="Rey M."/>
            <person name="Reynolds S."/>
            <person name="Rieger M."/>
            <person name="Rivolta C."/>
            <person name="Rocha E."/>
            <person name="Roche B."/>
            <person name="Rose M."/>
            <person name="Sadaie Y."/>
            <person name="Sato T."/>
            <person name="Scanlan E."/>
            <person name="Schleich S."/>
            <person name="Schroeter R."/>
            <person name="Scoffone F."/>
            <person name="Sekiguchi J."/>
            <person name="Sekowska A."/>
            <person name="Seror S.J."/>
            <person name="Serror P."/>
            <person name="Shin B.-S."/>
            <person name="Soldo B."/>
            <person name="Sorokin A."/>
            <person name="Tacconi E."/>
            <person name="Takagi T."/>
            <person name="Takahashi H."/>
            <person name="Takemaru K."/>
            <person name="Takeuchi M."/>
            <person name="Tamakoshi A."/>
            <person name="Tanaka T."/>
            <person name="Terpstra P."/>
            <person name="Tognoni A."/>
            <person name="Tosato V."/>
            <person name="Uchiyama S."/>
            <person name="Vandenbol M."/>
            <person name="Vannier F."/>
            <person name="Vassarotti A."/>
            <person name="Viari A."/>
            <person name="Wambutt R."/>
            <person name="Wedler E."/>
            <person name="Wedler H."/>
            <person name="Weitzenegger T."/>
            <person name="Winters P."/>
            <person name="Wipat A."/>
            <person name="Yamamoto H."/>
            <person name="Yamane K."/>
            <person name="Yasumoto K."/>
            <person name="Yata K."/>
            <person name="Yoshida K."/>
            <person name="Yoshikawa H.-F."/>
            <person name="Zumstein E."/>
            <person name="Yoshikawa H."/>
            <person name="Danchin A."/>
        </authorList>
    </citation>
    <scope>NUCLEOTIDE SEQUENCE [LARGE SCALE GENOMIC DNA]</scope>
    <source>
        <strain>168</strain>
    </source>
</reference>
<evidence type="ECO:0000250" key="1"/>
<evidence type="ECO:0000305" key="2"/>
<comment type="function">
    <text>Putative target of GltR.</text>
</comment>
<comment type="similarity">
    <text evidence="2">Belongs to the 4-oxalocrotonate tautomerase family.</text>
</comment>
<name>YRDN_BACSU</name>
<organism>
    <name type="scientific">Bacillus subtilis (strain 168)</name>
    <dbReference type="NCBI Taxonomy" id="224308"/>
    <lineage>
        <taxon>Bacteria</taxon>
        <taxon>Bacillati</taxon>
        <taxon>Bacillota</taxon>
        <taxon>Bacilli</taxon>
        <taxon>Bacillales</taxon>
        <taxon>Bacillaceae</taxon>
        <taxon>Bacillus</taxon>
    </lineage>
</organism>
<sequence length="129" mass="14682">MPLLRFDLIEGRDQSSLKKLLDVAHNVVVEAFDVPQQDRYQIVHEHPENHMIIEDTGLGFNRTKNLVVLSVTSKSRPEEKKQKFYRLLAERLESECGIASTDLIVSIVENDNADWSFGLGEAQFLTGKL</sequence>
<protein>
    <recommendedName>
        <fullName>Probable tautomerase YrdN</fullName>
        <ecNumber>5.3.2.-</ecNumber>
    </recommendedName>
</protein>
<dbReference type="EC" id="5.3.2.-"/>
<dbReference type="EMBL" id="U79494">
    <property type="protein sequence ID" value="AAB47964.1"/>
    <property type="molecule type" value="Genomic_DNA"/>
</dbReference>
<dbReference type="EMBL" id="U93876">
    <property type="protein sequence ID" value="AAB80906.1"/>
    <property type="molecule type" value="Genomic_DNA"/>
</dbReference>
<dbReference type="EMBL" id="AL009126">
    <property type="protein sequence ID" value="CAB14607.1"/>
    <property type="molecule type" value="Genomic_DNA"/>
</dbReference>
<dbReference type="PIR" id="E69973">
    <property type="entry name" value="E69973"/>
</dbReference>
<dbReference type="RefSeq" id="NP_390543.1">
    <property type="nucleotide sequence ID" value="NC_000964.3"/>
</dbReference>
<dbReference type="RefSeq" id="WP_004398711.1">
    <property type="nucleotide sequence ID" value="NZ_OZ025638.1"/>
</dbReference>
<dbReference type="SMR" id="P94502"/>
<dbReference type="FunCoup" id="P94502">
    <property type="interactions" value="45"/>
</dbReference>
<dbReference type="PaxDb" id="224308-BSU26660"/>
<dbReference type="EnsemblBacteria" id="CAB14607">
    <property type="protein sequence ID" value="CAB14607"/>
    <property type="gene ID" value="BSU_26660"/>
</dbReference>
<dbReference type="GeneID" id="937627"/>
<dbReference type="KEGG" id="bsu:BSU26660"/>
<dbReference type="PATRIC" id="fig|224308.179.peg.2897"/>
<dbReference type="eggNOG" id="COG1942">
    <property type="taxonomic scope" value="Bacteria"/>
</dbReference>
<dbReference type="InParanoid" id="P94502"/>
<dbReference type="OrthoDB" id="9804765at2"/>
<dbReference type="PhylomeDB" id="P94502"/>
<dbReference type="BioCyc" id="BSUB:BSU26660-MONOMER"/>
<dbReference type="Proteomes" id="UP000001570">
    <property type="component" value="Chromosome"/>
</dbReference>
<dbReference type="GO" id="GO:0016853">
    <property type="term" value="F:isomerase activity"/>
    <property type="evidence" value="ECO:0007669"/>
    <property type="project" value="UniProtKB-KW"/>
</dbReference>
<dbReference type="Gene3D" id="3.30.429.10">
    <property type="entry name" value="Macrophage Migration Inhibitory Factor"/>
    <property type="match status" value="1"/>
</dbReference>
<dbReference type="InterPro" id="IPR037479">
    <property type="entry name" value="Tauto_MSAD"/>
</dbReference>
<dbReference type="InterPro" id="IPR014347">
    <property type="entry name" value="Tautomerase/MIF_sf"/>
</dbReference>
<dbReference type="PANTHER" id="PTHR38460">
    <property type="entry name" value="TAUTOMERASE YOLI-RELATED"/>
    <property type="match status" value="1"/>
</dbReference>
<dbReference type="PANTHER" id="PTHR38460:SF1">
    <property type="entry name" value="TAUTOMERASE YOLI-RELATED"/>
    <property type="match status" value="1"/>
</dbReference>
<dbReference type="Pfam" id="PF14552">
    <property type="entry name" value="Tautomerase_2"/>
    <property type="match status" value="1"/>
</dbReference>
<dbReference type="SUPFAM" id="SSF55331">
    <property type="entry name" value="Tautomerase/MIF"/>
    <property type="match status" value="1"/>
</dbReference>
<gene>
    <name type="primary">yrdN</name>
    <name type="ordered locus">BSU26660</name>
</gene>
<proteinExistence type="inferred from homology"/>